<protein>
    <recommendedName>
        <fullName evidence="5">Ureidoglycolate hydrolase</fullName>
        <shortName evidence="5">OsUAH</shortName>
        <ecNumber evidence="4">3.5.1.116</ecNumber>
    </recommendedName>
</protein>
<proteinExistence type="evidence at protein level"/>
<sequence length="484" mass="51716">MATSAAARFLAALAGAAVLLVLLGGAAGAVVGHDDDAAAARRTMEEFAGFPASDYRGDGGGGSGGSSPFYVDSDGLQRQIDELASFSDSPVPSVTRVLYSDKDVQARRYIKGIMNQLGLSIREDAVGNIFGRWEGSEAGLGAVATGSHVDAIPFSGKYDGVVGVLGALEAIRMLKRSGFQPKRSLEVIMFTSEEPTRFGISCLGSRLMAGSEELARSLKETVDNQNVSFFDAADSAGYKMHPEELHNVFLKKDDYFAFVELHIEQGPILEKEGIKIGVVTAIAAPASIKVEFEGNGGHAGAVLMPARNDAGLAAAELALAVEKHVLESGSIDTVGTVGILQLHPGAINSIPSKSHVEIDVRDIDEKRRNNVIEKVHQSAIEISKNRGVLLSEFKIINQDPPALSDKSVISAMEFAAKQLNLEYKLMISRAYHDSLFMARISPMGMIFIPCYKGYSHKPEEYASPEDMANGVKVLALAMARLSLQ</sequence>
<keyword id="KW-0256">Endoplasmic reticulum</keyword>
<keyword id="KW-0378">Hydrolase</keyword>
<keyword id="KW-0464">Manganese</keyword>
<keyword id="KW-0479">Metal-binding</keyword>
<keyword id="KW-0659">Purine metabolism</keyword>
<keyword id="KW-1185">Reference proteome</keyword>
<keyword id="KW-0732">Signal</keyword>
<reference key="1">
    <citation type="journal article" date="2005" name="BMC Biol.">
        <title>The sequence of rice chromosomes 11 and 12, rich in disease resistance genes and recent gene duplications.</title>
        <authorList>
            <consortium name="The rice chromosomes 11 and 12 sequencing consortia"/>
        </authorList>
    </citation>
    <scope>NUCLEOTIDE SEQUENCE [LARGE SCALE GENOMIC DNA]</scope>
    <source>
        <strain>cv. Nipponbare</strain>
    </source>
</reference>
<reference key="2">
    <citation type="journal article" date="2005" name="Nature">
        <title>The map-based sequence of the rice genome.</title>
        <authorList>
            <consortium name="International rice genome sequencing project (IRGSP)"/>
        </authorList>
    </citation>
    <scope>NUCLEOTIDE SEQUENCE [LARGE SCALE GENOMIC DNA]</scope>
    <source>
        <strain>cv. Nipponbare</strain>
    </source>
</reference>
<reference key="3">
    <citation type="journal article" date="2008" name="Nucleic Acids Res.">
        <title>The rice annotation project database (RAP-DB): 2008 update.</title>
        <authorList>
            <consortium name="The rice annotation project (RAP)"/>
        </authorList>
    </citation>
    <scope>GENOME REANNOTATION</scope>
    <source>
        <strain>cv. Nipponbare</strain>
    </source>
</reference>
<reference key="4">
    <citation type="journal article" date="2013" name="Rice">
        <title>Improvement of the Oryza sativa Nipponbare reference genome using next generation sequence and optical map data.</title>
        <authorList>
            <person name="Kawahara Y."/>
            <person name="de la Bastide M."/>
            <person name="Hamilton J.P."/>
            <person name="Kanamori H."/>
            <person name="McCombie W.R."/>
            <person name="Ouyang S."/>
            <person name="Schwartz D.C."/>
            <person name="Tanaka T."/>
            <person name="Wu J."/>
            <person name="Zhou S."/>
            <person name="Childs K.L."/>
            <person name="Davidson R.M."/>
            <person name="Lin H."/>
            <person name="Quesada-Ocampo L."/>
            <person name="Vaillancourt B."/>
            <person name="Sakai H."/>
            <person name="Lee S.S."/>
            <person name="Kim J."/>
            <person name="Numa H."/>
            <person name="Itoh T."/>
            <person name="Buell C.R."/>
            <person name="Matsumoto T."/>
        </authorList>
    </citation>
    <scope>GENOME REANNOTATION</scope>
    <source>
        <strain>cv. Nipponbare</strain>
    </source>
</reference>
<reference key="5">
    <citation type="journal article" date="2005" name="PLoS Biol.">
        <title>The genomes of Oryza sativa: a history of duplications.</title>
        <authorList>
            <person name="Yu J."/>
            <person name="Wang J."/>
            <person name="Lin W."/>
            <person name="Li S."/>
            <person name="Li H."/>
            <person name="Zhou J."/>
            <person name="Ni P."/>
            <person name="Dong W."/>
            <person name="Hu S."/>
            <person name="Zeng C."/>
            <person name="Zhang J."/>
            <person name="Zhang Y."/>
            <person name="Li R."/>
            <person name="Xu Z."/>
            <person name="Li S."/>
            <person name="Li X."/>
            <person name="Zheng H."/>
            <person name="Cong L."/>
            <person name="Lin L."/>
            <person name="Yin J."/>
            <person name="Geng J."/>
            <person name="Li G."/>
            <person name="Shi J."/>
            <person name="Liu J."/>
            <person name="Lv H."/>
            <person name="Li J."/>
            <person name="Wang J."/>
            <person name="Deng Y."/>
            <person name="Ran L."/>
            <person name="Shi X."/>
            <person name="Wang X."/>
            <person name="Wu Q."/>
            <person name="Li C."/>
            <person name="Ren X."/>
            <person name="Wang J."/>
            <person name="Wang X."/>
            <person name="Li D."/>
            <person name="Liu D."/>
            <person name="Zhang X."/>
            <person name="Ji Z."/>
            <person name="Zhao W."/>
            <person name="Sun Y."/>
            <person name="Zhang Z."/>
            <person name="Bao J."/>
            <person name="Han Y."/>
            <person name="Dong L."/>
            <person name="Ji J."/>
            <person name="Chen P."/>
            <person name="Wu S."/>
            <person name="Liu J."/>
            <person name="Xiao Y."/>
            <person name="Bu D."/>
            <person name="Tan J."/>
            <person name="Yang L."/>
            <person name="Ye C."/>
            <person name="Zhang J."/>
            <person name="Xu J."/>
            <person name="Zhou Y."/>
            <person name="Yu Y."/>
            <person name="Zhang B."/>
            <person name="Zhuang S."/>
            <person name="Wei H."/>
            <person name="Liu B."/>
            <person name="Lei M."/>
            <person name="Yu H."/>
            <person name="Li Y."/>
            <person name="Xu H."/>
            <person name="Wei S."/>
            <person name="He X."/>
            <person name="Fang L."/>
            <person name="Zhang Z."/>
            <person name="Zhang Y."/>
            <person name="Huang X."/>
            <person name="Su Z."/>
            <person name="Tong W."/>
            <person name="Li J."/>
            <person name="Tong Z."/>
            <person name="Li S."/>
            <person name="Ye J."/>
            <person name="Wang L."/>
            <person name="Fang L."/>
            <person name="Lei T."/>
            <person name="Chen C.-S."/>
            <person name="Chen H.-C."/>
            <person name="Xu Z."/>
            <person name="Li H."/>
            <person name="Huang H."/>
            <person name="Zhang F."/>
            <person name="Xu H."/>
            <person name="Li N."/>
            <person name="Zhao C."/>
            <person name="Li S."/>
            <person name="Dong L."/>
            <person name="Huang Y."/>
            <person name="Li L."/>
            <person name="Xi Y."/>
            <person name="Qi Q."/>
            <person name="Li W."/>
            <person name="Zhang B."/>
            <person name="Hu W."/>
            <person name="Zhang Y."/>
            <person name="Tian X."/>
            <person name="Jiao Y."/>
            <person name="Liang X."/>
            <person name="Jin J."/>
            <person name="Gao L."/>
            <person name="Zheng W."/>
            <person name="Hao B."/>
            <person name="Liu S.-M."/>
            <person name="Wang W."/>
            <person name="Yuan L."/>
            <person name="Cao M."/>
            <person name="McDermott J."/>
            <person name="Samudrala R."/>
            <person name="Wang J."/>
            <person name="Wong G.K.-S."/>
            <person name="Yang H."/>
        </authorList>
    </citation>
    <scope>NUCLEOTIDE SEQUENCE [LARGE SCALE GENOMIC DNA]</scope>
    <source>
        <strain>cv. Nipponbare</strain>
    </source>
</reference>
<reference key="6">
    <citation type="journal article" date="2010" name="Nat. Chem. Biol.">
        <title>Ureide catabolism in Arabidopsis thaliana and Escherichia coli.</title>
        <authorList>
            <person name="Werner A.K."/>
            <person name="Romeis T."/>
            <person name="Witte C.P."/>
        </authorList>
    </citation>
    <scope>IDENTIFICATION</scope>
</reference>
<reference key="7">
    <citation type="journal article" date="2013" name="Plant Physiol.">
        <title>The ureide-degrading reactions of purine ring catabolism employ three amidohydrolases and one aminohydrolase in Arabidopsis, soybean, and rice.</title>
        <authorList>
            <person name="Werner A.K."/>
            <person name="Medina-Escobar N."/>
            <person name="Zulawski M."/>
            <person name="Sparkes I.A."/>
            <person name="Cao F.Q."/>
            <person name="Witte C.P."/>
        </authorList>
    </citation>
    <scope>FUNCTION</scope>
    <scope>CATALYTIC ACTIVITY</scope>
    <scope>BIOPHYSICOCHEMICAL PROPERTIES</scope>
</reference>
<organism>
    <name type="scientific">Oryza sativa subsp. japonica</name>
    <name type="common">Rice</name>
    <dbReference type="NCBI Taxonomy" id="39947"/>
    <lineage>
        <taxon>Eukaryota</taxon>
        <taxon>Viridiplantae</taxon>
        <taxon>Streptophyta</taxon>
        <taxon>Embryophyta</taxon>
        <taxon>Tracheophyta</taxon>
        <taxon>Spermatophyta</taxon>
        <taxon>Magnoliopsida</taxon>
        <taxon>Liliopsida</taxon>
        <taxon>Poales</taxon>
        <taxon>Poaceae</taxon>
        <taxon>BOP clade</taxon>
        <taxon>Oryzoideae</taxon>
        <taxon>Oryzeae</taxon>
        <taxon>Oryzinae</taxon>
        <taxon>Oryza</taxon>
        <taxon>Oryza sativa</taxon>
    </lineage>
</organism>
<dbReference type="EC" id="3.5.1.116" evidence="4"/>
<dbReference type="EMBL" id="DP000011">
    <property type="protein sequence ID" value="ABA99240.2"/>
    <property type="molecule type" value="Genomic_DNA"/>
</dbReference>
<dbReference type="EMBL" id="AP008218">
    <property type="protein sequence ID" value="BAF30214.1"/>
    <property type="status" value="ALT_SEQ"/>
    <property type="molecule type" value="Genomic_DNA"/>
</dbReference>
<dbReference type="EMBL" id="AP014968">
    <property type="protein sequence ID" value="BAT17934.1"/>
    <property type="molecule type" value="Genomic_DNA"/>
</dbReference>
<dbReference type="EMBL" id="CM000149">
    <property type="protein sequence ID" value="EEE53540.1"/>
    <property type="status" value="ALT_SEQ"/>
    <property type="molecule type" value="Genomic_DNA"/>
</dbReference>
<dbReference type="RefSeq" id="XP_015620061.1">
    <property type="nucleotide sequence ID" value="XM_015764575.1"/>
</dbReference>
<dbReference type="SMR" id="Q2QMN7"/>
<dbReference type="FunCoup" id="Q2QMN7">
    <property type="interactions" value="404"/>
</dbReference>
<dbReference type="STRING" id="39947.Q2QMN7"/>
<dbReference type="PaxDb" id="39947-Q2QMN7"/>
<dbReference type="EnsemblPlants" id="Os12t0597500-02">
    <property type="protein sequence ID" value="Os12t0597500-02"/>
    <property type="gene ID" value="Os12g0597500"/>
</dbReference>
<dbReference type="Gramene" id="Os12t0597500-02">
    <property type="protein sequence ID" value="Os12t0597500-02"/>
    <property type="gene ID" value="Os12g0597500"/>
</dbReference>
<dbReference type="KEGG" id="dosa:Os12g0597500"/>
<dbReference type="eggNOG" id="ENOG502QPR4">
    <property type="taxonomic scope" value="Eukaryota"/>
</dbReference>
<dbReference type="InParanoid" id="Q2QMN7"/>
<dbReference type="OMA" id="IWPHGRW"/>
<dbReference type="OrthoDB" id="4676at2759"/>
<dbReference type="BRENDA" id="3.5.1.116">
    <property type="organism ID" value="8948"/>
</dbReference>
<dbReference type="PlantReactome" id="R-OSA-1119502">
    <property type="pathway name" value="Allantoin degradation"/>
</dbReference>
<dbReference type="SABIO-RK" id="Q2QMN7"/>
<dbReference type="UniPathway" id="UPA00395">
    <property type="reaction ID" value="UER00656"/>
</dbReference>
<dbReference type="Proteomes" id="UP000000763">
    <property type="component" value="Chromosome 12"/>
</dbReference>
<dbReference type="Proteomes" id="UP000007752">
    <property type="component" value="Chromosome 12"/>
</dbReference>
<dbReference type="Proteomes" id="UP000059680">
    <property type="component" value="Chromosome 12"/>
</dbReference>
<dbReference type="ExpressionAtlas" id="Q2QMN7">
    <property type="expression patterns" value="baseline and differential"/>
</dbReference>
<dbReference type="GO" id="GO:0005783">
    <property type="term" value="C:endoplasmic reticulum"/>
    <property type="evidence" value="ECO:0007669"/>
    <property type="project" value="UniProtKB-SubCell"/>
</dbReference>
<dbReference type="GO" id="GO:0016813">
    <property type="term" value="F:hydrolase activity, acting on carbon-nitrogen (but not peptide) bonds, in linear amidines"/>
    <property type="evidence" value="ECO:0007669"/>
    <property type="project" value="InterPro"/>
</dbReference>
<dbReference type="GO" id="GO:0030145">
    <property type="term" value="F:manganese ion binding"/>
    <property type="evidence" value="ECO:0000250"/>
    <property type="project" value="UniProtKB"/>
</dbReference>
<dbReference type="GO" id="GO:0004848">
    <property type="term" value="F:ureidoglycolate hydrolase activity"/>
    <property type="evidence" value="ECO:0000314"/>
    <property type="project" value="UniProtKB"/>
</dbReference>
<dbReference type="GO" id="GO:0000256">
    <property type="term" value="P:allantoin catabolic process"/>
    <property type="evidence" value="ECO:0000304"/>
    <property type="project" value="UniProtKB"/>
</dbReference>
<dbReference type="GO" id="GO:0006145">
    <property type="term" value="P:purine nucleobase catabolic process"/>
    <property type="evidence" value="ECO:0007669"/>
    <property type="project" value="EnsemblPlants"/>
</dbReference>
<dbReference type="GO" id="GO:0010136">
    <property type="term" value="P:ureide catabolic process"/>
    <property type="evidence" value="ECO:0007669"/>
    <property type="project" value="EnsemblPlants"/>
</dbReference>
<dbReference type="CDD" id="cd03884">
    <property type="entry name" value="M20_bAS"/>
    <property type="match status" value="1"/>
</dbReference>
<dbReference type="FunFam" id="3.40.630.10:FF:000044">
    <property type="entry name" value="Allantoate amidohydrolase"/>
    <property type="match status" value="1"/>
</dbReference>
<dbReference type="FunFam" id="3.30.70.360:FF:000012">
    <property type="entry name" value="Putative ureidoglycolate hydrolase"/>
    <property type="match status" value="1"/>
</dbReference>
<dbReference type="Gene3D" id="3.30.70.360">
    <property type="match status" value="1"/>
</dbReference>
<dbReference type="Gene3D" id="3.40.630.10">
    <property type="entry name" value="Zn peptidases"/>
    <property type="match status" value="1"/>
</dbReference>
<dbReference type="InterPro" id="IPR010158">
    <property type="entry name" value="Amidase_Cbmase"/>
</dbReference>
<dbReference type="InterPro" id="IPR036264">
    <property type="entry name" value="Bact_exopeptidase_dim_dom"/>
</dbReference>
<dbReference type="InterPro" id="IPR002933">
    <property type="entry name" value="Peptidase_M20"/>
</dbReference>
<dbReference type="NCBIfam" id="TIGR01879">
    <property type="entry name" value="hydantase"/>
    <property type="match status" value="1"/>
</dbReference>
<dbReference type="PANTHER" id="PTHR32494">
    <property type="entry name" value="ALLANTOATE DEIMINASE-RELATED"/>
    <property type="match status" value="1"/>
</dbReference>
<dbReference type="PANTHER" id="PTHR32494:SF19">
    <property type="entry name" value="ALLANTOATE DEIMINASE-RELATED"/>
    <property type="match status" value="1"/>
</dbReference>
<dbReference type="Pfam" id="PF01546">
    <property type="entry name" value="Peptidase_M20"/>
    <property type="match status" value="1"/>
</dbReference>
<dbReference type="SUPFAM" id="SSF55031">
    <property type="entry name" value="Bacterial exopeptidase dimerisation domain"/>
    <property type="match status" value="1"/>
</dbReference>
<dbReference type="SUPFAM" id="SSF53187">
    <property type="entry name" value="Zn-dependent exopeptidases"/>
    <property type="match status" value="1"/>
</dbReference>
<feature type="signal peptide" evidence="3">
    <location>
        <begin position="1"/>
        <end position="28"/>
    </location>
</feature>
<feature type="chain" id="PRO_0000423447" description="Ureidoglycolate hydrolase">
    <location>
        <begin position="29"/>
        <end position="484"/>
    </location>
</feature>
<feature type="region of interest" description="Substrate" evidence="2">
    <location>
        <begin position="193"/>
        <end position="194"/>
    </location>
</feature>
<feature type="region of interest" description="Substrate" evidence="2">
    <location>
        <begin position="262"/>
        <end position="265"/>
    </location>
</feature>
<feature type="region of interest" description="Involved in dimerization" evidence="2">
    <location>
        <begin position="284"/>
        <end position="399"/>
    </location>
</feature>
<feature type="region of interest" description="Substrate" evidence="2">
    <location>
        <begin position="431"/>
        <end position="432"/>
    </location>
</feature>
<feature type="binding site" evidence="2">
    <location>
        <position position="148"/>
    </location>
    <ligand>
        <name>Mn(2+)</name>
        <dbReference type="ChEBI" id="CHEBI:29035"/>
        <label>1</label>
    </ligand>
</feature>
<feature type="binding site" evidence="2">
    <location>
        <position position="159"/>
    </location>
    <ligand>
        <name>Mn(2+)</name>
        <dbReference type="ChEBI" id="CHEBI:29035"/>
        <label>1</label>
    </ligand>
</feature>
<feature type="binding site" evidence="2">
    <location>
        <position position="159"/>
    </location>
    <ligand>
        <name>Mn(2+)</name>
        <dbReference type="ChEBI" id="CHEBI:29035"/>
        <label>2</label>
    </ligand>
</feature>
<feature type="binding site" evidence="2">
    <location>
        <position position="194"/>
    </location>
    <ligand>
        <name>Mn(2+)</name>
        <dbReference type="ChEBI" id="CHEBI:29035"/>
        <label>2</label>
    </ligand>
</feature>
<feature type="binding site" evidence="2">
    <location>
        <position position="262"/>
    </location>
    <ligand>
        <name>Mn(2+)</name>
        <dbReference type="ChEBI" id="CHEBI:29035"/>
        <label>1</label>
    </ligand>
</feature>
<feature type="binding site" evidence="2">
    <location>
        <position position="298"/>
    </location>
    <ligand>
        <name>substrate</name>
    </ligand>
</feature>
<feature type="binding site" evidence="2">
    <location>
        <position position="348"/>
    </location>
    <ligand>
        <name>substrate</name>
    </ligand>
</feature>
<feature type="binding site" evidence="2">
    <location>
        <position position="361"/>
    </location>
    <ligand>
        <name>substrate</name>
    </ligand>
</feature>
<feature type="binding site" evidence="2">
    <location>
        <position position="456"/>
    </location>
    <ligand>
        <name>Mn(2+)</name>
        <dbReference type="ChEBI" id="CHEBI:29035"/>
        <label>2</label>
    </ligand>
</feature>
<feature type="binding site" evidence="2">
    <location>
        <position position="456"/>
    </location>
    <ligand>
        <name>substrate</name>
    </ligand>
</feature>
<feature type="site" description="Necessary for dimerization" evidence="1">
    <location>
        <position position="307"/>
    </location>
</feature>
<accession>Q2QMN7</accession>
<accession>A0A0P0YC33</accession>
<accession>B9GE33</accession>
<accession>Q0IM51</accession>
<gene>
    <name evidence="5" type="primary">UAH</name>
    <name type="ordered locus">Os12g0597500</name>
    <name type="ordered locus">LOC_Os12g40550</name>
    <name evidence="7" type="ORF">OsJ_36749</name>
</gene>
<evidence type="ECO:0000250" key="1">
    <source>
        <dbReference type="UniProtKB" id="Q53389"/>
    </source>
</evidence>
<evidence type="ECO:0000250" key="2">
    <source>
        <dbReference type="UniProtKB" id="Q8VXY9"/>
    </source>
</evidence>
<evidence type="ECO:0000255" key="3"/>
<evidence type="ECO:0000269" key="4">
    <source>
    </source>
</evidence>
<evidence type="ECO:0000303" key="5">
    <source>
    </source>
</evidence>
<evidence type="ECO:0000305" key="6"/>
<evidence type="ECO:0000312" key="7">
    <source>
        <dbReference type="EMBL" id="EEE53540.1"/>
    </source>
</evidence>
<name>UAH_ORYSJ</name>
<comment type="function">
    <text evidence="4">Involved in the catabolism of purine nucleotides. The sequential activity of AAH, UGLYAH and UAH allows a complete purine breakdown without the intermediate generation of urea.</text>
</comment>
<comment type="catalytic activity">
    <reaction evidence="4">
        <text>(S)-ureidoglycolate + H2O + 2 H(+) = glyoxylate + 2 NH4(+) + CO2</text>
        <dbReference type="Rhea" id="RHEA:19809"/>
        <dbReference type="ChEBI" id="CHEBI:15377"/>
        <dbReference type="ChEBI" id="CHEBI:15378"/>
        <dbReference type="ChEBI" id="CHEBI:16526"/>
        <dbReference type="ChEBI" id="CHEBI:28938"/>
        <dbReference type="ChEBI" id="CHEBI:36655"/>
        <dbReference type="ChEBI" id="CHEBI:57296"/>
        <dbReference type="EC" id="3.5.1.116"/>
    </reaction>
</comment>
<comment type="cofactor">
    <cofactor evidence="2">
        <name>Mn(2+)</name>
        <dbReference type="ChEBI" id="CHEBI:29035"/>
    </cofactor>
    <cofactor evidence="2">
        <name>Ni(2+)</name>
        <dbReference type="ChEBI" id="CHEBI:49786"/>
    </cofactor>
    <cofactor evidence="2">
        <name>Co(2+)</name>
        <dbReference type="ChEBI" id="CHEBI:48828"/>
    </cofactor>
    <text evidence="2">Binds 2 manganese ions per subunit.</text>
</comment>
<comment type="biophysicochemical properties">
    <kinetics>
        <KM evidence="4">188 uM for ureidoglycolate</KM>
    </kinetics>
</comment>
<comment type="pathway">
    <text evidence="4">Nitrogen metabolism; (S)-allantoin degradation; glyoxylate from (S)-ureidoglycolate: step 1/1.</text>
</comment>
<comment type="subunit">
    <text evidence="2">Homodimer.</text>
</comment>
<comment type="subcellular location">
    <subcellularLocation>
        <location evidence="2">Endoplasmic reticulum</location>
    </subcellularLocation>
</comment>
<comment type="similarity">
    <text evidence="6">Belongs to the peptidase M20 family.</text>
</comment>
<comment type="sequence caution" evidence="6">
    <conflict type="erroneous gene model prediction">
        <sequence resource="EMBL-CDS" id="BAF30214"/>
    </conflict>
</comment>
<comment type="sequence caution" evidence="6">
    <conflict type="erroneous gene model prediction">
        <sequence resource="EMBL-CDS" id="EEE53540"/>
    </conflict>
</comment>